<comment type="function">
    <text evidence="1">Catalyzes the complicated ring closure reaction between the two acyclic compounds 1-deoxy-D-xylulose-5-phosphate (DXP) and 3-amino-2-oxopropyl phosphate (1-amino-acetone-3-phosphate or AAP) to form pyridoxine 5'-phosphate (PNP) and inorganic phosphate.</text>
</comment>
<comment type="catalytic activity">
    <reaction evidence="1">
        <text>3-amino-2-oxopropyl phosphate + 1-deoxy-D-xylulose 5-phosphate = pyridoxine 5'-phosphate + phosphate + 2 H2O + H(+)</text>
        <dbReference type="Rhea" id="RHEA:15265"/>
        <dbReference type="ChEBI" id="CHEBI:15377"/>
        <dbReference type="ChEBI" id="CHEBI:15378"/>
        <dbReference type="ChEBI" id="CHEBI:43474"/>
        <dbReference type="ChEBI" id="CHEBI:57279"/>
        <dbReference type="ChEBI" id="CHEBI:57792"/>
        <dbReference type="ChEBI" id="CHEBI:58589"/>
        <dbReference type="EC" id="2.6.99.2"/>
    </reaction>
</comment>
<comment type="pathway">
    <text evidence="1">Cofactor biosynthesis; pyridoxine 5'-phosphate biosynthesis; pyridoxine 5'-phosphate from D-erythrose 4-phosphate: step 5/5.</text>
</comment>
<comment type="subunit">
    <text evidence="1">Homooctamer; tetramer of dimers.</text>
</comment>
<comment type="subcellular location">
    <subcellularLocation>
        <location evidence="1">Cytoplasm</location>
    </subcellularLocation>
</comment>
<comment type="similarity">
    <text evidence="1">Belongs to the PNP synthase family.</text>
</comment>
<name>PDXJ_BRASO</name>
<dbReference type="EC" id="2.6.99.2" evidence="1"/>
<dbReference type="EMBL" id="CU234118">
    <property type="protein sequence ID" value="CAL78207.1"/>
    <property type="molecule type" value="Genomic_DNA"/>
</dbReference>
<dbReference type="RefSeq" id="WP_011927321.1">
    <property type="nucleotide sequence ID" value="NC_009445.1"/>
</dbReference>
<dbReference type="SMR" id="A4YWD1"/>
<dbReference type="STRING" id="114615.BRADO4467"/>
<dbReference type="KEGG" id="bra:BRADO4467"/>
<dbReference type="eggNOG" id="COG0854">
    <property type="taxonomic scope" value="Bacteria"/>
</dbReference>
<dbReference type="HOGENOM" id="CLU_074563_0_0_5"/>
<dbReference type="OrthoDB" id="9806590at2"/>
<dbReference type="UniPathway" id="UPA00244">
    <property type="reaction ID" value="UER00313"/>
</dbReference>
<dbReference type="Proteomes" id="UP000001994">
    <property type="component" value="Chromosome"/>
</dbReference>
<dbReference type="GO" id="GO:0005829">
    <property type="term" value="C:cytosol"/>
    <property type="evidence" value="ECO:0007669"/>
    <property type="project" value="TreeGrafter"/>
</dbReference>
<dbReference type="GO" id="GO:0033856">
    <property type="term" value="F:pyridoxine 5'-phosphate synthase activity"/>
    <property type="evidence" value="ECO:0007669"/>
    <property type="project" value="UniProtKB-EC"/>
</dbReference>
<dbReference type="GO" id="GO:0008615">
    <property type="term" value="P:pyridoxine biosynthetic process"/>
    <property type="evidence" value="ECO:0007669"/>
    <property type="project" value="UniProtKB-UniRule"/>
</dbReference>
<dbReference type="CDD" id="cd00003">
    <property type="entry name" value="PNPsynthase"/>
    <property type="match status" value="1"/>
</dbReference>
<dbReference type="FunFam" id="3.20.20.70:FF:000150">
    <property type="entry name" value="Pyridoxine 5'-phosphate synthase"/>
    <property type="match status" value="1"/>
</dbReference>
<dbReference type="Gene3D" id="3.20.20.70">
    <property type="entry name" value="Aldolase class I"/>
    <property type="match status" value="1"/>
</dbReference>
<dbReference type="HAMAP" id="MF_00279">
    <property type="entry name" value="PdxJ"/>
    <property type="match status" value="1"/>
</dbReference>
<dbReference type="InterPro" id="IPR013785">
    <property type="entry name" value="Aldolase_TIM"/>
</dbReference>
<dbReference type="InterPro" id="IPR004569">
    <property type="entry name" value="PyrdxlP_synth_PdxJ"/>
</dbReference>
<dbReference type="InterPro" id="IPR036130">
    <property type="entry name" value="Pyridoxine-5'_phos_synth"/>
</dbReference>
<dbReference type="NCBIfam" id="TIGR00559">
    <property type="entry name" value="pdxJ"/>
    <property type="match status" value="1"/>
</dbReference>
<dbReference type="NCBIfam" id="NF003624">
    <property type="entry name" value="PRK05265.1-2"/>
    <property type="match status" value="1"/>
</dbReference>
<dbReference type="NCBIfam" id="NF003625">
    <property type="entry name" value="PRK05265.1-3"/>
    <property type="match status" value="1"/>
</dbReference>
<dbReference type="NCBIfam" id="NF003627">
    <property type="entry name" value="PRK05265.1-5"/>
    <property type="match status" value="1"/>
</dbReference>
<dbReference type="PANTHER" id="PTHR30456">
    <property type="entry name" value="PYRIDOXINE 5'-PHOSPHATE SYNTHASE"/>
    <property type="match status" value="1"/>
</dbReference>
<dbReference type="PANTHER" id="PTHR30456:SF0">
    <property type="entry name" value="PYRIDOXINE 5'-PHOSPHATE SYNTHASE"/>
    <property type="match status" value="1"/>
</dbReference>
<dbReference type="Pfam" id="PF03740">
    <property type="entry name" value="PdxJ"/>
    <property type="match status" value="1"/>
</dbReference>
<dbReference type="SUPFAM" id="SSF63892">
    <property type="entry name" value="Pyridoxine 5'-phosphate synthase"/>
    <property type="match status" value="1"/>
</dbReference>
<organism>
    <name type="scientific">Bradyrhizobium sp. (strain ORS 278)</name>
    <dbReference type="NCBI Taxonomy" id="114615"/>
    <lineage>
        <taxon>Bacteria</taxon>
        <taxon>Pseudomonadati</taxon>
        <taxon>Pseudomonadota</taxon>
        <taxon>Alphaproteobacteria</taxon>
        <taxon>Hyphomicrobiales</taxon>
        <taxon>Nitrobacteraceae</taxon>
        <taxon>Bradyrhizobium</taxon>
    </lineage>
</organism>
<feature type="chain" id="PRO_1000022363" description="Pyridoxine 5'-phosphate synthase">
    <location>
        <begin position="1"/>
        <end position="256"/>
    </location>
</feature>
<feature type="active site" description="Proton acceptor" evidence="1">
    <location>
        <position position="48"/>
    </location>
</feature>
<feature type="active site" description="Proton acceptor" evidence="1">
    <location>
        <position position="75"/>
    </location>
</feature>
<feature type="active site" description="Proton donor" evidence="1">
    <location>
        <position position="199"/>
    </location>
</feature>
<feature type="binding site" evidence="1">
    <location>
        <position position="12"/>
    </location>
    <ligand>
        <name>3-amino-2-oxopropyl phosphate</name>
        <dbReference type="ChEBI" id="CHEBI:57279"/>
    </ligand>
</feature>
<feature type="binding site" evidence="1">
    <location>
        <begin position="14"/>
        <end position="15"/>
    </location>
    <ligand>
        <name>1-deoxy-D-xylulose 5-phosphate</name>
        <dbReference type="ChEBI" id="CHEBI:57792"/>
    </ligand>
</feature>
<feature type="binding site" evidence="1">
    <location>
        <position position="23"/>
    </location>
    <ligand>
        <name>3-amino-2-oxopropyl phosphate</name>
        <dbReference type="ChEBI" id="CHEBI:57279"/>
    </ligand>
</feature>
<feature type="binding site" evidence="1">
    <location>
        <position position="50"/>
    </location>
    <ligand>
        <name>1-deoxy-D-xylulose 5-phosphate</name>
        <dbReference type="ChEBI" id="CHEBI:57792"/>
    </ligand>
</feature>
<feature type="binding site" evidence="1">
    <location>
        <position position="55"/>
    </location>
    <ligand>
        <name>1-deoxy-D-xylulose 5-phosphate</name>
        <dbReference type="ChEBI" id="CHEBI:57792"/>
    </ligand>
</feature>
<feature type="binding site" evidence="1">
    <location>
        <position position="105"/>
    </location>
    <ligand>
        <name>1-deoxy-D-xylulose 5-phosphate</name>
        <dbReference type="ChEBI" id="CHEBI:57792"/>
    </ligand>
</feature>
<feature type="binding site" evidence="1">
    <location>
        <position position="200"/>
    </location>
    <ligand>
        <name>3-amino-2-oxopropyl phosphate</name>
        <dbReference type="ChEBI" id="CHEBI:57279"/>
    </ligand>
</feature>
<feature type="binding site" evidence="1">
    <location>
        <begin position="221"/>
        <end position="222"/>
    </location>
    <ligand>
        <name>3-amino-2-oxopropyl phosphate</name>
        <dbReference type="ChEBI" id="CHEBI:57279"/>
    </ligand>
</feature>
<feature type="site" description="Transition state stabilizer" evidence="1">
    <location>
        <position position="156"/>
    </location>
</feature>
<evidence type="ECO:0000255" key="1">
    <source>
        <dbReference type="HAMAP-Rule" id="MF_00279"/>
    </source>
</evidence>
<protein>
    <recommendedName>
        <fullName evidence="1">Pyridoxine 5'-phosphate synthase</fullName>
        <shortName evidence="1">PNP synthase</shortName>
        <ecNumber evidence="1">2.6.99.2</ecNumber>
    </recommendedName>
</protein>
<proteinExistence type="inferred from homology"/>
<sequence>MSHPPKLRLGVNVDHIATLRNARGGRAPDPVRAALLAIEAGADGITAHLREDRRHIRDDDMARLKAQISRPLNFEMAATEEMVRIALATKPHACCLVPERREELTTEGGLDVVGQHNALAPAIARLSEAGIRVSLFIAADPAQIEMAARLRAPVIEIHTGGWCDAITDGHHDKADAEWQRIVAGARQAYAAGLEVHAGHGLDYATAEQIAALPEIRELNIGYFIMGEALFVGLAESVRTMRAAMDRGRDRATGATA</sequence>
<gene>
    <name evidence="1" type="primary">pdxJ</name>
    <name type="ordered locus">BRADO4467</name>
</gene>
<reference key="1">
    <citation type="journal article" date="2007" name="Science">
        <title>Legumes symbioses: absence of nod genes in photosynthetic bradyrhizobia.</title>
        <authorList>
            <person name="Giraud E."/>
            <person name="Moulin L."/>
            <person name="Vallenet D."/>
            <person name="Barbe V."/>
            <person name="Cytryn E."/>
            <person name="Avarre J.-C."/>
            <person name="Jaubert M."/>
            <person name="Simon D."/>
            <person name="Cartieaux F."/>
            <person name="Prin Y."/>
            <person name="Bena G."/>
            <person name="Hannibal L."/>
            <person name="Fardoux J."/>
            <person name="Kojadinovic M."/>
            <person name="Vuillet L."/>
            <person name="Lajus A."/>
            <person name="Cruveiller S."/>
            <person name="Rouy Z."/>
            <person name="Mangenot S."/>
            <person name="Segurens B."/>
            <person name="Dossat C."/>
            <person name="Franck W.L."/>
            <person name="Chang W.-S."/>
            <person name="Saunders E."/>
            <person name="Bruce D."/>
            <person name="Richardson P."/>
            <person name="Normand P."/>
            <person name="Dreyfus B."/>
            <person name="Pignol D."/>
            <person name="Stacey G."/>
            <person name="Emerich D."/>
            <person name="Vermeglio A."/>
            <person name="Medigue C."/>
            <person name="Sadowsky M."/>
        </authorList>
    </citation>
    <scope>NUCLEOTIDE SEQUENCE [LARGE SCALE GENOMIC DNA]</scope>
    <source>
        <strain>ORS 278</strain>
    </source>
</reference>
<accession>A4YWD1</accession>
<keyword id="KW-0963">Cytoplasm</keyword>
<keyword id="KW-0664">Pyridoxine biosynthesis</keyword>
<keyword id="KW-1185">Reference proteome</keyword>
<keyword id="KW-0808">Transferase</keyword>